<sequence length="254" mass="27780">MTGCTTPGDALLSFEPLEEGVLIKRYKRFLADVELSSGEVITAHCANTGPMTGVLIPGQRVRLRHAPSPKRKLAWTWEQAEVPGADGAPCWVGINTALPNRLIRATIEAGCLAAQLGPIASIRAEVAYGANKRSRIDLLLTPTDSNPDQRPIYLEVKNTTWTDGTTALFPDTVTERGQKHLVELMGVLPDSRAVLVPCLSRPDVTEFAPGDSADPRYGELFREAIKAGVEVLPCRFRFQADGIRWEGIRPLKQL</sequence>
<proteinExistence type="inferred from homology"/>
<evidence type="ECO:0000255" key="1">
    <source>
        <dbReference type="HAMAP-Rule" id="MF_00095"/>
    </source>
</evidence>
<protein>
    <recommendedName>
        <fullName evidence="1">Sugar fermentation stimulation protein homolog</fullName>
    </recommendedName>
</protein>
<organism>
    <name type="scientific">Parasynechococcus marenigrum (strain WH8102)</name>
    <dbReference type="NCBI Taxonomy" id="84588"/>
    <lineage>
        <taxon>Bacteria</taxon>
        <taxon>Bacillati</taxon>
        <taxon>Cyanobacteriota</taxon>
        <taxon>Cyanophyceae</taxon>
        <taxon>Synechococcales</taxon>
        <taxon>Prochlorococcaceae</taxon>
        <taxon>Parasynechococcus</taxon>
        <taxon>Parasynechococcus marenigrum</taxon>
    </lineage>
</organism>
<accession>Q7U9K2</accession>
<dbReference type="EMBL" id="BX569689">
    <property type="protein sequence ID" value="CAE06769.1"/>
    <property type="molecule type" value="Genomic_DNA"/>
</dbReference>
<dbReference type="RefSeq" id="WP_011127130.1">
    <property type="nucleotide sequence ID" value="NC_005070.1"/>
</dbReference>
<dbReference type="SMR" id="Q7U9K2"/>
<dbReference type="STRING" id="84588.SYNW0254"/>
<dbReference type="KEGG" id="syw:SYNW0254"/>
<dbReference type="eggNOG" id="COG1489">
    <property type="taxonomic scope" value="Bacteria"/>
</dbReference>
<dbReference type="HOGENOM" id="CLU_052299_2_0_3"/>
<dbReference type="Proteomes" id="UP000001422">
    <property type="component" value="Chromosome"/>
</dbReference>
<dbReference type="GO" id="GO:0003677">
    <property type="term" value="F:DNA binding"/>
    <property type="evidence" value="ECO:0007669"/>
    <property type="project" value="InterPro"/>
</dbReference>
<dbReference type="CDD" id="cd22359">
    <property type="entry name" value="SfsA-like_bacterial"/>
    <property type="match status" value="1"/>
</dbReference>
<dbReference type="Gene3D" id="2.40.50.580">
    <property type="match status" value="1"/>
</dbReference>
<dbReference type="Gene3D" id="3.40.1350.60">
    <property type="match status" value="1"/>
</dbReference>
<dbReference type="HAMAP" id="MF_00095">
    <property type="entry name" value="SfsA"/>
    <property type="match status" value="1"/>
</dbReference>
<dbReference type="InterPro" id="IPR005224">
    <property type="entry name" value="SfsA"/>
</dbReference>
<dbReference type="InterPro" id="IPR040452">
    <property type="entry name" value="SfsA_C"/>
</dbReference>
<dbReference type="InterPro" id="IPR041465">
    <property type="entry name" value="SfsA_N"/>
</dbReference>
<dbReference type="NCBIfam" id="TIGR00230">
    <property type="entry name" value="sfsA"/>
    <property type="match status" value="1"/>
</dbReference>
<dbReference type="PANTHER" id="PTHR30545">
    <property type="entry name" value="SUGAR FERMENTATION STIMULATION PROTEIN A"/>
    <property type="match status" value="1"/>
</dbReference>
<dbReference type="PANTHER" id="PTHR30545:SF2">
    <property type="entry name" value="SUGAR FERMENTATION STIMULATION PROTEIN A"/>
    <property type="match status" value="1"/>
</dbReference>
<dbReference type="Pfam" id="PF03749">
    <property type="entry name" value="SfsA"/>
    <property type="match status" value="1"/>
</dbReference>
<dbReference type="Pfam" id="PF17746">
    <property type="entry name" value="SfsA_N"/>
    <property type="match status" value="1"/>
</dbReference>
<comment type="similarity">
    <text evidence="1">Belongs to the SfsA family.</text>
</comment>
<gene>
    <name evidence="1" type="primary">sfsA</name>
    <name type="ordered locus">SYNW0254</name>
</gene>
<name>SFSA_PARMW</name>
<feature type="chain" id="PRO_0000152311" description="Sugar fermentation stimulation protein homolog">
    <location>
        <begin position="1"/>
        <end position="254"/>
    </location>
</feature>
<reference key="1">
    <citation type="journal article" date="2003" name="Nature">
        <title>The genome of a motile marine Synechococcus.</title>
        <authorList>
            <person name="Palenik B."/>
            <person name="Brahamsha B."/>
            <person name="Larimer F.W."/>
            <person name="Land M.L."/>
            <person name="Hauser L."/>
            <person name="Chain P."/>
            <person name="Lamerdin J.E."/>
            <person name="Regala W."/>
            <person name="Allen E.E."/>
            <person name="McCarren J."/>
            <person name="Paulsen I.T."/>
            <person name="Dufresne A."/>
            <person name="Partensky F."/>
            <person name="Webb E.A."/>
            <person name="Waterbury J."/>
        </authorList>
    </citation>
    <scope>NUCLEOTIDE SEQUENCE [LARGE SCALE GENOMIC DNA]</scope>
    <source>
        <strain>WH8102</strain>
    </source>
</reference>